<gene>
    <name evidence="1" type="primary">ispD</name>
    <name type="ordered locus">RSKD131_1125</name>
</gene>
<organism>
    <name type="scientific">Cereibacter sphaeroides (strain KD131 / KCTC 12085)</name>
    <name type="common">Rhodobacter sphaeroides</name>
    <dbReference type="NCBI Taxonomy" id="557760"/>
    <lineage>
        <taxon>Bacteria</taxon>
        <taxon>Pseudomonadati</taxon>
        <taxon>Pseudomonadota</taxon>
        <taxon>Alphaproteobacteria</taxon>
        <taxon>Rhodobacterales</taxon>
        <taxon>Paracoccaceae</taxon>
        <taxon>Cereibacter</taxon>
    </lineage>
</organism>
<keyword id="KW-0414">Isoprene biosynthesis</keyword>
<keyword id="KW-0548">Nucleotidyltransferase</keyword>
<keyword id="KW-0808">Transferase</keyword>
<dbReference type="EC" id="2.7.7.60" evidence="1"/>
<dbReference type="EMBL" id="CP001150">
    <property type="protein sequence ID" value="ACM00985.1"/>
    <property type="molecule type" value="Genomic_DNA"/>
</dbReference>
<dbReference type="RefSeq" id="WP_015920535.1">
    <property type="nucleotide sequence ID" value="NC_011963.1"/>
</dbReference>
<dbReference type="SMR" id="B9KSH8"/>
<dbReference type="GeneID" id="67446553"/>
<dbReference type="KEGG" id="rsk:RSKD131_1125"/>
<dbReference type="HOGENOM" id="CLU_061281_3_0_5"/>
<dbReference type="UniPathway" id="UPA00056">
    <property type="reaction ID" value="UER00093"/>
</dbReference>
<dbReference type="GO" id="GO:0050518">
    <property type="term" value="F:2-C-methyl-D-erythritol 4-phosphate cytidylyltransferase activity"/>
    <property type="evidence" value="ECO:0007669"/>
    <property type="project" value="UniProtKB-UniRule"/>
</dbReference>
<dbReference type="GO" id="GO:0019288">
    <property type="term" value="P:isopentenyl diphosphate biosynthetic process, methylerythritol 4-phosphate pathway"/>
    <property type="evidence" value="ECO:0007669"/>
    <property type="project" value="UniProtKB-UniRule"/>
</dbReference>
<dbReference type="CDD" id="cd02516">
    <property type="entry name" value="CDP-ME_synthetase"/>
    <property type="match status" value="1"/>
</dbReference>
<dbReference type="FunFam" id="3.90.550.10:FF:000003">
    <property type="entry name" value="2-C-methyl-D-erythritol 4-phosphate cytidylyltransferase"/>
    <property type="match status" value="1"/>
</dbReference>
<dbReference type="Gene3D" id="3.90.550.10">
    <property type="entry name" value="Spore Coat Polysaccharide Biosynthesis Protein SpsA, Chain A"/>
    <property type="match status" value="1"/>
</dbReference>
<dbReference type="HAMAP" id="MF_00108">
    <property type="entry name" value="IspD"/>
    <property type="match status" value="1"/>
</dbReference>
<dbReference type="InterPro" id="IPR001228">
    <property type="entry name" value="IspD"/>
</dbReference>
<dbReference type="InterPro" id="IPR034683">
    <property type="entry name" value="IspD/TarI"/>
</dbReference>
<dbReference type="InterPro" id="IPR050088">
    <property type="entry name" value="IspD/TarI_cytidylyltransf_bact"/>
</dbReference>
<dbReference type="InterPro" id="IPR018294">
    <property type="entry name" value="ISPD_synthase_CS"/>
</dbReference>
<dbReference type="InterPro" id="IPR029044">
    <property type="entry name" value="Nucleotide-diphossugar_trans"/>
</dbReference>
<dbReference type="NCBIfam" id="TIGR00453">
    <property type="entry name" value="ispD"/>
    <property type="match status" value="1"/>
</dbReference>
<dbReference type="PANTHER" id="PTHR32125">
    <property type="entry name" value="2-C-METHYL-D-ERYTHRITOL 4-PHOSPHATE CYTIDYLYLTRANSFERASE, CHLOROPLASTIC"/>
    <property type="match status" value="1"/>
</dbReference>
<dbReference type="PANTHER" id="PTHR32125:SF4">
    <property type="entry name" value="2-C-METHYL-D-ERYTHRITOL 4-PHOSPHATE CYTIDYLYLTRANSFERASE, CHLOROPLASTIC"/>
    <property type="match status" value="1"/>
</dbReference>
<dbReference type="Pfam" id="PF01128">
    <property type="entry name" value="IspD"/>
    <property type="match status" value="1"/>
</dbReference>
<dbReference type="SUPFAM" id="SSF53448">
    <property type="entry name" value="Nucleotide-diphospho-sugar transferases"/>
    <property type="match status" value="1"/>
</dbReference>
<dbReference type="PROSITE" id="PS01295">
    <property type="entry name" value="ISPD"/>
    <property type="match status" value="1"/>
</dbReference>
<reference key="1">
    <citation type="journal article" date="2009" name="J. Bacteriol.">
        <title>Complete genome sequence of Rhodobacter sphaeroides KD131.</title>
        <authorList>
            <person name="Lim S.-K."/>
            <person name="Kim S.J."/>
            <person name="Cha S.H."/>
            <person name="Oh Y.-K."/>
            <person name="Rhee H.-J."/>
            <person name="Kim M.-S."/>
            <person name="Lee J.K."/>
        </authorList>
    </citation>
    <scope>NUCLEOTIDE SEQUENCE [LARGE SCALE GENOMIC DNA]</scope>
    <source>
        <strain>KD131 / KCTC 12085</strain>
    </source>
</reference>
<protein>
    <recommendedName>
        <fullName evidence="1">2-C-methyl-D-erythritol 4-phosphate cytidylyltransferase</fullName>
        <ecNumber evidence="1">2.7.7.60</ecNumber>
    </recommendedName>
    <alternativeName>
        <fullName evidence="1">4-diphosphocytidyl-2C-methyl-D-erythritol synthase</fullName>
    </alternativeName>
    <alternativeName>
        <fullName evidence="1">MEP cytidylyltransferase</fullName>
        <shortName evidence="1">MCT</shortName>
    </alternativeName>
</protein>
<proteinExistence type="inferred from homology"/>
<sequence length="225" mass="23012">MTTAAIIVAAGRGTRAGGDLPKQWQPLAGRPVLAHTLAAFRAAAGVSRTLLVIHPDDRARAEALPGVAEGKVELVEGGASRDASVRNALEALAGAGIERVLIHDGARPLVAPGLIARTLAALESAPGAAPAVPVSDALWRGEGGRVVGTQDRTGLFRAQTPQAFRYEAILAAHRAHPGGAADDVEVARAAGLEVAIVEGCEDNLKVTYPGDFARAERLLALAAGL</sequence>
<name>ISPD_CERSK</name>
<feature type="chain" id="PRO_1000191065" description="2-C-methyl-D-erythritol 4-phosphate cytidylyltransferase">
    <location>
        <begin position="1"/>
        <end position="225"/>
    </location>
</feature>
<feature type="site" description="Transition state stabilizer" evidence="1">
    <location>
        <position position="15"/>
    </location>
</feature>
<feature type="site" description="Transition state stabilizer" evidence="1">
    <location>
        <position position="22"/>
    </location>
</feature>
<feature type="site" description="Positions MEP for the nucleophilic attack" evidence="1">
    <location>
        <position position="152"/>
    </location>
</feature>
<feature type="site" description="Positions MEP for the nucleophilic attack" evidence="1">
    <location>
        <position position="205"/>
    </location>
</feature>
<evidence type="ECO:0000255" key="1">
    <source>
        <dbReference type="HAMAP-Rule" id="MF_00108"/>
    </source>
</evidence>
<comment type="function">
    <text evidence="1">Catalyzes the formation of 4-diphosphocytidyl-2-C-methyl-D-erythritol from CTP and 2-C-methyl-D-erythritol 4-phosphate (MEP).</text>
</comment>
<comment type="catalytic activity">
    <reaction evidence="1">
        <text>2-C-methyl-D-erythritol 4-phosphate + CTP + H(+) = 4-CDP-2-C-methyl-D-erythritol + diphosphate</text>
        <dbReference type="Rhea" id="RHEA:13429"/>
        <dbReference type="ChEBI" id="CHEBI:15378"/>
        <dbReference type="ChEBI" id="CHEBI:33019"/>
        <dbReference type="ChEBI" id="CHEBI:37563"/>
        <dbReference type="ChEBI" id="CHEBI:57823"/>
        <dbReference type="ChEBI" id="CHEBI:58262"/>
        <dbReference type="EC" id="2.7.7.60"/>
    </reaction>
</comment>
<comment type="pathway">
    <text evidence="1">Isoprenoid biosynthesis; isopentenyl diphosphate biosynthesis via DXP pathway; isopentenyl diphosphate from 1-deoxy-D-xylulose 5-phosphate: step 2/6.</text>
</comment>
<comment type="similarity">
    <text evidence="1">Belongs to the IspD/TarI cytidylyltransferase family. IspD subfamily.</text>
</comment>
<accession>B9KSH8</accession>